<organism>
    <name type="scientific">Bacillus anthracis (strain CDC 684 / NRRL 3495)</name>
    <dbReference type="NCBI Taxonomy" id="568206"/>
    <lineage>
        <taxon>Bacteria</taxon>
        <taxon>Bacillati</taxon>
        <taxon>Bacillota</taxon>
        <taxon>Bacilli</taxon>
        <taxon>Bacillales</taxon>
        <taxon>Bacillaceae</taxon>
        <taxon>Bacillus</taxon>
        <taxon>Bacillus cereus group</taxon>
    </lineage>
</organism>
<feature type="chain" id="PRO_1000199763" description="Uracil-DNA glycosylase">
    <location>
        <begin position="1"/>
        <end position="225"/>
    </location>
</feature>
<feature type="active site" description="Proton acceptor" evidence="1">
    <location>
        <position position="65"/>
    </location>
</feature>
<name>UNG_BACAC</name>
<gene>
    <name evidence="1" type="primary">ung</name>
    <name type="ordered locus">BAMEG_5692</name>
</gene>
<accession>C3LFS7</accession>
<protein>
    <recommendedName>
        <fullName evidence="1">Uracil-DNA glycosylase</fullName>
        <shortName evidence="1">UDG</shortName>
        <ecNumber evidence="1">3.2.2.27</ecNumber>
    </recommendedName>
</protein>
<reference key="1">
    <citation type="submission" date="2008-10" db="EMBL/GenBank/DDBJ databases">
        <title>Genome sequence of Bacillus anthracis str. CDC 684.</title>
        <authorList>
            <person name="Dodson R.J."/>
            <person name="Munk A.C."/>
            <person name="Brettin T."/>
            <person name="Bruce D."/>
            <person name="Detter C."/>
            <person name="Tapia R."/>
            <person name="Han C."/>
            <person name="Sutton G."/>
            <person name="Sims D."/>
        </authorList>
    </citation>
    <scope>NUCLEOTIDE SEQUENCE [LARGE SCALE GENOMIC DNA]</scope>
    <source>
        <strain>CDC 684 / NRRL 3495</strain>
    </source>
</reference>
<sequence length="225" mass="25918">MKHVLKNDWGPLLAPEFEKEYYRELDVFLKEEYSTHVVYPKIEDIFNALEYTSYENTKVVILGQDPYHGPNQAHGLSFSVQPGVKTPPSLLNMYKELRDEYGYDIPNNGYLVKWAEQGVLLLNTVLTVRQGEANSHKGKGWEHFTDRVIELLNEREKPVIFILWGRHAQAKKKLITNPNHQIIESVHPSPLSARRGFFGSKPYSKVNTILANMGEGEIDWEIPNL</sequence>
<proteinExistence type="inferred from homology"/>
<dbReference type="EC" id="3.2.2.27" evidence="1"/>
<dbReference type="EMBL" id="CP001215">
    <property type="protein sequence ID" value="ACP15100.1"/>
    <property type="molecule type" value="Genomic_DNA"/>
</dbReference>
<dbReference type="RefSeq" id="WP_000683472.1">
    <property type="nucleotide sequence ID" value="NC_012581.1"/>
</dbReference>
<dbReference type="SMR" id="C3LFS7"/>
<dbReference type="KEGG" id="bah:BAMEG_5692"/>
<dbReference type="HOGENOM" id="CLU_032162_3_0_9"/>
<dbReference type="GO" id="GO:0005737">
    <property type="term" value="C:cytoplasm"/>
    <property type="evidence" value="ECO:0007669"/>
    <property type="project" value="UniProtKB-SubCell"/>
</dbReference>
<dbReference type="GO" id="GO:0004844">
    <property type="term" value="F:uracil DNA N-glycosylase activity"/>
    <property type="evidence" value="ECO:0007669"/>
    <property type="project" value="UniProtKB-UniRule"/>
</dbReference>
<dbReference type="GO" id="GO:0097510">
    <property type="term" value="P:base-excision repair, AP site formation via deaminated base removal"/>
    <property type="evidence" value="ECO:0007669"/>
    <property type="project" value="TreeGrafter"/>
</dbReference>
<dbReference type="CDD" id="cd10027">
    <property type="entry name" value="UDG-F1-like"/>
    <property type="match status" value="1"/>
</dbReference>
<dbReference type="FunFam" id="3.40.470.10:FF:000001">
    <property type="entry name" value="Uracil-DNA glycosylase"/>
    <property type="match status" value="1"/>
</dbReference>
<dbReference type="Gene3D" id="3.40.470.10">
    <property type="entry name" value="Uracil-DNA glycosylase-like domain"/>
    <property type="match status" value="1"/>
</dbReference>
<dbReference type="HAMAP" id="MF_00148">
    <property type="entry name" value="UDG"/>
    <property type="match status" value="1"/>
</dbReference>
<dbReference type="InterPro" id="IPR002043">
    <property type="entry name" value="UDG_fam1"/>
</dbReference>
<dbReference type="InterPro" id="IPR018085">
    <property type="entry name" value="Ura-DNA_Glyclase_AS"/>
</dbReference>
<dbReference type="InterPro" id="IPR005122">
    <property type="entry name" value="Uracil-DNA_glycosylase-like"/>
</dbReference>
<dbReference type="InterPro" id="IPR036895">
    <property type="entry name" value="Uracil-DNA_glycosylase-like_sf"/>
</dbReference>
<dbReference type="NCBIfam" id="NF003588">
    <property type="entry name" value="PRK05254.1-1"/>
    <property type="match status" value="1"/>
</dbReference>
<dbReference type="NCBIfam" id="NF003589">
    <property type="entry name" value="PRK05254.1-2"/>
    <property type="match status" value="1"/>
</dbReference>
<dbReference type="NCBIfam" id="NF003591">
    <property type="entry name" value="PRK05254.1-4"/>
    <property type="match status" value="1"/>
</dbReference>
<dbReference type="NCBIfam" id="NF003592">
    <property type="entry name" value="PRK05254.1-5"/>
    <property type="match status" value="1"/>
</dbReference>
<dbReference type="NCBIfam" id="TIGR00628">
    <property type="entry name" value="ung"/>
    <property type="match status" value="1"/>
</dbReference>
<dbReference type="PANTHER" id="PTHR11264">
    <property type="entry name" value="URACIL-DNA GLYCOSYLASE"/>
    <property type="match status" value="1"/>
</dbReference>
<dbReference type="PANTHER" id="PTHR11264:SF0">
    <property type="entry name" value="URACIL-DNA GLYCOSYLASE"/>
    <property type="match status" value="1"/>
</dbReference>
<dbReference type="Pfam" id="PF03167">
    <property type="entry name" value="UDG"/>
    <property type="match status" value="1"/>
</dbReference>
<dbReference type="SMART" id="SM00986">
    <property type="entry name" value="UDG"/>
    <property type="match status" value="1"/>
</dbReference>
<dbReference type="SMART" id="SM00987">
    <property type="entry name" value="UreE_C"/>
    <property type="match status" value="1"/>
</dbReference>
<dbReference type="SUPFAM" id="SSF52141">
    <property type="entry name" value="Uracil-DNA glycosylase-like"/>
    <property type="match status" value="1"/>
</dbReference>
<dbReference type="PROSITE" id="PS00130">
    <property type="entry name" value="U_DNA_GLYCOSYLASE"/>
    <property type="match status" value="1"/>
</dbReference>
<evidence type="ECO:0000255" key="1">
    <source>
        <dbReference type="HAMAP-Rule" id="MF_00148"/>
    </source>
</evidence>
<comment type="function">
    <text evidence="1">Excises uracil residues from the DNA which can arise as a result of misincorporation of dUMP residues by DNA polymerase or due to deamination of cytosine.</text>
</comment>
<comment type="catalytic activity">
    <reaction evidence="1">
        <text>Hydrolyzes single-stranded DNA or mismatched double-stranded DNA and polynucleotides, releasing free uracil.</text>
        <dbReference type="EC" id="3.2.2.27"/>
    </reaction>
</comment>
<comment type="subcellular location">
    <subcellularLocation>
        <location evidence="1">Cytoplasm</location>
    </subcellularLocation>
</comment>
<comment type="similarity">
    <text evidence="1">Belongs to the uracil-DNA glycosylase (UDG) superfamily. UNG family.</text>
</comment>
<keyword id="KW-0963">Cytoplasm</keyword>
<keyword id="KW-0227">DNA damage</keyword>
<keyword id="KW-0234">DNA repair</keyword>
<keyword id="KW-0378">Hydrolase</keyword>